<keyword id="KW-0997">Cell inner membrane</keyword>
<keyword id="KW-1003">Cell membrane</keyword>
<keyword id="KW-0342">GTP-binding</keyword>
<keyword id="KW-0378">Hydrolase</keyword>
<keyword id="KW-0472">Membrane</keyword>
<keyword id="KW-0547">Nucleotide-binding</keyword>
<keyword id="KW-0648">Protein biosynthesis</keyword>
<protein>
    <recommendedName>
        <fullName evidence="1">Elongation factor 4</fullName>
        <shortName evidence="1">EF-4</shortName>
        <ecNumber evidence="1">3.6.5.n1</ecNumber>
    </recommendedName>
    <alternativeName>
        <fullName evidence="1">Ribosomal back-translocase LepA</fullName>
    </alternativeName>
</protein>
<gene>
    <name evidence="1" type="primary">lepA</name>
    <name type="ordered locus">YPN_1204</name>
    <name type="ORF">YP516_1317</name>
</gene>
<sequence length="599" mass="66709">MKHIRNFSIIAHIDHGKSTLSDRIIQICGGLSEREMAAQVLDSMDLERERGITIKAQSVTLDYHSKDGQTYQLNFIDTPGHVDFSYEVSRSLAACEGALLVVDAGQGVEAQTLANCYTAMEMDLEVVPVLNKIDLPAADPERVAEEIEDIVGIDATDAIRCSAKTGVGVPDVLERLVRDIPAPEGDPNGPLQALIIDSWFDNYLGVVSLIRIKNGSLRKGDKVKVMSTGQSYNADRLGIFTPKRVDRDVLNCGEVGWLVCAIKDILGAPVGDTLTLTRNPAEKSLPGFKKVKPQVYAGLFPISSDDYESFRDALGKLSLNDASLFYEPESSTALGFGFRCGFLGLLHMEIIQERLEREYDLELITTAPTVVYEVITTNQETVYVDSPSKLPALNNIEELREPIAECHMLLPQEYLGNVITLCIEKRGTQTNMVYHGKQVALTYEIPMAEVVLDFFDRLKSTSRGYASLDYNFKRFQTSDMVRVDVLINNERVDALALITHRDNAQYRGRDLVEKMKELIPRQQFDIAIQAAIGNHIIARSTVKQLRKNVLAKCYGGDVSRKKKLLQKQKDGKKRMKQVGNVELPQEAFLAILHVGKDSK</sequence>
<comment type="function">
    <text evidence="1">Required for accurate and efficient protein synthesis under certain stress conditions. May act as a fidelity factor of the translation reaction, by catalyzing a one-codon backward translocation of tRNAs on improperly translocated ribosomes. Back-translocation proceeds from a post-translocation (POST) complex to a pre-translocation (PRE) complex, thus giving elongation factor G a second chance to translocate the tRNAs correctly. Binds to ribosomes in a GTP-dependent manner.</text>
</comment>
<comment type="catalytic activity">
    <reaction evidence="1">
        <text>GTP + H2O = GDP + phosphate + H(+)</text>
        <dbReference type="Rhea" id="RHEA:19669"/>
        <dbReference type="ChEBI" id="CHEBI:15377"/>
        <dbReference type="ChEBI" id="CHEBI:15378"/>
        <dbReference type="ChEBI" id="CHEBI:37565"/>
        <dbReference type="ChEBI" id="CHEBI:43474"/>
        <dbReference type="ChEBI" id="CHEBI:58189"/>
        <dbReference type="EC" id="3.6.5.n1"/>
    </reaction>
</comment>
<comment type="subcellular location">
    <subcellularLocation>
        <location evidence="1">Cell inner membrane</location>
        <topology evidence="1">Peripheral membrane protein</topology>
        <orientation evidence="1">Cytoplasmic side</orientation>
    </subcellularLocation>
</comment>
<comment type="similarity">
    <text evidence="1">Belongs to the TRAFAC class translation factor GTPase superfamily. Classic translation factor GTPase family. LepA subfamily.</text>
</comment>
<name>LEPA_YERPN</name>
<accession>Q1CKE6</accession>
<accession>C4GRE9</accession>
<reference key="1">
    <citation type="journal article" date="2006" name="J. Bacteriol.">
        <title>Complete genome sequence of Yersinia pestis strains Antiqua and Nepal516: evidence of gene reduction in an emerging pathogen.</title>
        <authorList>
            <person name="Chain P.S.G."/>
            <person name="Hu P."/>
            <person name="Malfatti S.A."/>
            <person name="Radnedge L."/>
            <person name="Larimer F."/>
            <person name="Vergez L.M."/>
            <person name="Worsham P."/>
            <person name="Chu M.C."/>
            <person name="Andersen G.L."/>
        </authorList>
    </citation>
    <scope>NUCLEOTIDE SEQUENCE [LARGE SCALE GENOMIC DNA]</scope>
    <source>
        <strain>Nepal516</strain>
    </source>
</reference>
<reference key="2">
    <citation type="submission" date="2009-04" db="EMBL/GenBank/DDBJ databases">
        <title>Yersinia pestis Nepal516A whole genome shotgun sequencing project.</title>
        <authorList>
            <person name="Plunkett G. III"/>
            <person name="Anderson B.D."/>
            <person name="Baumler D.J."/>
            <person name="Burland V."/>
            <person name="Cabot E.L."/>
            <person name="Glasner J.D."/>
            <person name="Mau B."/>
            <person name="Neeno-Eckwall E."/>
            <person name="Perna N.T."/>
            <person name="Munk A.C."/>
            <person name="Tapia R."/>
            <person name="Green L.D."/>
            <person name="Rogers Y.C."/>
            <person name="Detter J.C."/>
            <person name="Bruce D.C."/>
            <person name="Brettin T.S."/>
        </authorList>
    </citation>
    <scope>NUCLEOTIDE SEQUENCE [LARGE SCALE GENOMIC DNA]</scope>
    <source>
        <strain>Nepal516</strain>
    </source>
</reference>
<proteinExistence type="inferred from homology"/>
<organism>
    <name type="scientific">Yersinia pestis bv. Antiqua (strain Nepal516)</name>
    <dbReference type="NCBI Taxonomy" id="377628"/>
    <lineage>
        <taxon>Bacteria</taxon>
        <taxon>Pseudomonadati</taxon>
        <taxon>Pseudomonadota</taxon>
        <taxon>Gammaproteobacteria</taxon>
        <taxon>Enterobacterales</taxon>
        <taxon>Yersiniaceae</taxon>
        <taxon>Yersinia</taxon>
    </lineage>
</organism>
<evidence type="ECO:0000255" key="1">
    <source>
        <dbReference type="HAMAP-Rule" id="MF_00071"/>
    </source>
</evidence>
<dbReference type="EC" id="3.6.5.n1" evidence="1"/>
<dbReference type="EMBL" id="CP000305">
    <property type="protein sequence ID" value="ABG17534.1"/>
    <property type="molecule type" value="Genomic_DNA"/>
</dbReference>
<dbReference type="EMBL" id="ACNQ01000008">
    <property type="protein sequence ID" value="EEO77640.1"/>
    <property type="molecule type" value="Genomic_DNA"/>
</dbReference>
<dbReference type="RefSeq" id="WP_002209677.1">
    <property type="nucleotide sequence ID" value="NZ_ACNQ01000008.1"/>
</dbReference>
<dbReference type="SMR" id="Q1CKE6"/>
<dbReference type="GeneID" id="57975975"/>
<dbReference type="KEGG" id="ypn:YPN_1204"/>
<dbReference type="HOGENOM" id="CLU_009995_3_3_6"/>
<dbReference type="Proteomes" id="UP000008936">
    <property type="component" value="Chromosome"/>
</dbReference>
<dbReference type="GO" id="GO:0005886">
    <property type="term" value="C:plasma membrane"/>
    <property type="evidence" value="ECO:0007669"/>
    <property type="project" value="UniProtKB-SubCell"/>
</dbReference>
<dbReference type="GO" id="GO:0005525">
    <property type="term" value="F:GTP binding"/>
    <property type="evidence" value="ECO:0007669"/>
    <property type="project" value="UniProtKB-UniRule"/>
</dbReference>
<dbReference type="GO" id="GO:0003924">
    <property type="term" value="F:GTPase activity"/>
    <property type="evidence" value="ECO:0007669"/>
    <property type="project" value="UniProtKB-UniRule"/>
</dbReference>
<dbReference type="GO" id="GO:0097216">
    <property type="term" value="F:guanosine tetraphosphate binding"/>
    <property type="evidence" value="ECO:0007669"/>
    <property type="project" value="UniProtKB-ARBA"/>
</dbReference>
<dbReference type="GO" id="GO:0043022">
    <property type="term" value="F:ribosome binding"/>
    <property type="evidence" value="ECO:0007669"/>
    <property type="project" value="UniProtKB-UniRule"/>
</dbReference>
<dbReference type="GO" id="GO:0003746">
    <property type="term" value="F:translation elongation factor activity"/>
    <property type="evidence" value="ECO:0007669"/>
    <property type="project" value="UniProtKB-UniRule"/>
</dbReference>
<dbReference type="GO" id="GO:0045727">
    <property type="term" value="P:positive regulation of translation"/>
    <property type="evidence" value="ECO:0007669"/>
    <property type="project" value="UniProtKB-UniRule"/>
</dbReference>
<dbReference type="CDD" id="cd03699">
    <property type="entry name" value="EF4_II"/>
    <property type="match status" value="1"/>
</dbReference>
<dbReference type="CDD" id="cd16260">
    <property type="entry name" value="EF4_III"/>
    <property type="match status" value="1"/>
</dbReference>
<dbReference type="CDD" id="cd01890">
    <property type="entry name" value="LepA"/>
    <property type="match status" value="1"/>
</dbReference>
<dbReference type="CDD" id="cd03709">
    <property type="entry name" value="lepA_C"/>
    <property type="match status" value="1"/>
</dbReference>
<dbReference type="FunFam" id="3.30.70.240:FF:000005">
    <property type="entry name" value="Elongation factor 4"/>
    <property type="match status" value="1"/>
</dbReference>
<dbReference type="FunFam" id="3.40.50.300:FF:000078">
    <property type="entry name" value="Elongation factor 4"/>
    <property type="match status" value="1"/>
</dbReference>
<dbReference type="FunFam" id="2.40.30.10:FF:000015">
    <property type="entry name" value="Translation factor GUF1, mitochondrial"/>
    <property type="match status" value="1"/>
</dbReference>
<dbReference type="FunFam" id="3.30.70.2570:FF:000001">
    <property type="entry name" value="Translation factor GUF1, mitochondrial"/>
    <property type="match status" value="1"/>
</dbReference>
<dbReference type="FunFam" id="3.30.70.870:FF:000004">
    <property type="entry name" value="Translation factor GUF1, mitochondrial"/>
    <property type="match status" value="1"/>
</dbReference>
<dbReference type="Gene3D" id="3.30.70.240">
    <property type="match status" value="1"/>
</dbReference>
<dbReference type="Gene3D" id="3.30.70.2570">
    <property type="entry name" value="Elongation factor 4, C-terminal domain"/>
    <property type="match status" value="1"/>
</dbReference>
<dbReference type="Gene3D" id="3.30.70.870">
    <property type="entry name" value="Elongation Factor G (Translational Gtpase), domain 3"/>
    <property type="match status" value="1"/>
</dbReference>
<dbReference type="Gene3D" id="3.40.50.300">
    <property type="entry name" value="P-loop containing nucleotide triphosphate hydrolases"/>
    <property type="match status" value="1"/>
</dbReference>
<dbReference type="Gene3D" id="2.40.30.10">
    <property type="entry name" value="Translation factors"/>
    <property type="match status" value="1"/>
</dbReference>
<dbReference type="HAMAP" id="MF_00071">
    <property type="entry name" value="LepA"/>
    <property type="match status" value="1"/>
</dbReference>
<dbReference type="InterPro" id="IPR006297">
    <property type="entry name" value="EF-4"/>
</dbReference>
<dbReference type="InterPro" id="IPR035647">
    <property type="entry name" value="EFG_III/V"/>
</dbReference>
<dbReference type="InterPro" id="IPR000640">
    <property type="entry name" value="EFG_V-like"/>
</dbReference>
<dbReference type="InterPro" id="IPR004161">
    <property type="entry name" value="EFTu-like_2"/>
</dbReference>
<dbReference type="InterPro" id="IPR031157">
    <property type="entry name" value="G_TR_CS"/>
</dbReference>
<dbReference type="InterPro" id="IPR038363">
    <property type="entry name" value="LepA_C_sf"/>
</dbReference>
<dbReference type="InterPro" id="IPR013842">
    <property type="entry name" value="LepA_CTD"/>
</dbReference>
<dbReference type="InterPro" id="IPR035654">
    <property type="entry name" value="LepA_IV"/>
</dbReference>
<dbReference type="InterPro" id="IPR027417">
    <property type="entry name" value="P-loop_NTPase"/>
</dbReference>
<dbReference type="InterPro" id="IPR005225">
    <property type="entry name" value="Small_GTP-bd"/>
</dbReference>
<dbReference type="InterPro" id="IPR000795">
    <property type="entry name" value="T_Tr_GTP-bd_dom"/>
</dbReference>
<dbReference type="NCBIfam" id="TIGR01393">
    <property type="entry name" value="lepA"/>
    <property type="match status" value="1"/>
</dbReference>
<dbReference type="NCBIfam" id="TIGR00231">
    <property type="entry name" value="small_GTP"/>
    <property type="match status" value="1"/>
</dbReference>
<dbReference type="PANTHER" id="PTHR43512:SF4">
    <property type="entry name" value="TRANSLATION FACTOR GUF1 HOMOLOG, CHLOROPLASTIC"/>
    <property type="match status" value="1"/>
</dbReference>
<dbReference type="PANTHER" id="PTHR43512">
    <property type="entry name" value="TRANSLATION FACTOR GUF1-RELATED"/>
    <property type="match status" value="1"/>
</dbReference>
<dbReference type="Pfam" id="PF00679">
    <property type="entry name" value="EFG_C"/>
    <property type="match status" value="1"/>
</dbReference>
<dbReference type="Pfam" id="PF00009">
    <property type="entry name" value="GTP_EFTU"/>
    <property type="match status" value="1"/>
</dbReference>
<dbReference type="Pfam" id="PF03144">
    <property type="entry name" value="GTP_EFTU_D2"/>
    <property type="match status" value="1"/>
</dbReference>
<dbReference type="Pfam" id="PF06421">
    <property type="entry name" value="LepA_C"/>
    <property type="match status" value="1"/>
</dbReference>
<dbReference type="PRINTS" id="PR00315">
    <property type="entry name" value="ELONGATNFCT"/>
</dbReference>
<dbReference type="SUPFAM" id="SSF54980">
    <property type="entry name" value="EF-G C-terminal domain-like"/>
    <property type="match status" value="2"/>
</dbReference>
<dbReference type="SUPFAM" id="SSF52540">
    <property type="entry name" value="P-loop containing nucleoside triphosphate hydrolases"/>
    <property type="match status" value="1"/>
</dbReference>
<dbReference type="PROSITE" id="PS00301">
    <property type="entry name" value="G_TR_1"/>
    <property type="match status" value="1"/>
</dbReference>
<dbReference type="PROSITE" id="PS51722">
    <property type="entry name" value="G_TR_2"/>
    <property type="match status" value="1"/>
</dbReference>
<feature type="chain" id="PRO_0000265727" description="Elongation factor 4">
    <location>
        <begin position="1"/>
        <end position="599"/>
    </location>
</feature>
<feature type="domain" description="tr-type G">
    <location>
        <begin position="2"/>
        <end position="184"/>
    </location>
</feature>
<feature type="binding site" evidence="1">
    <location>
        <begin position="14"/>
        <end position="19"/>
    </location>
    <ligand>
        <name>GTP</name>
        <dbReference type="ChEBI" id="CHEBI:37565"/>
    </ligand>
</feature>
<feature type="binding site" evidence="1">
    <location>
        <begin position="131"/>
        <end position="134"/>
    </location>
    <ligand>
        <name>GTP</name>
        <dbReference type="ChEBI" id="CHEBI:37565"/>
    </ligand>
</feature>